<dbReference type="EC" id="1.1.1.261" evidence="1"/>
<dbReference type="EMBL" id="CP001338">
    <property type="protein sequence ID" value="ACL16300.1"/>
    <property type="molecule type" value="Genomic_DNA"/>
</dbReference>
<dbReference type="RefSeq" id="WP_012617619.1">
    <property type="nucleotide sequence ID" value="NC_011832.1"/>
</dbReference>
<dbReference type="SMR" id="B8GGP5"/>
<dbReference type="STRING" id="521011.Mpal_0948"/>
<dbReference type="GeneID" id="7272441"/>
<dbReference type="KEGG" id="mpl:Mpal_0948"/>
<dbReference type="eggNOG" id="arCOG00982">
    <property type="taxonomic scope" value="Archaea"/>
</dbReference>
<dbReference type="HOGENOM" id="CLU_038362_0_0_2"/>
<dbReference type="OrthoDB" id="8656at2157"/>
<dbReference type="UniPathway" id="UPA00940"/>
<dbReference type="Proteomes" id="UP000002457">
    <property type="component" value="Chromosome"/>
</dbReference>
<dbReference type="GO" id="GO:0005737">
    <property type="term" value="C:cytoplasm"/>
    <property type="evidence" value="ECO:0007669"/>
    <property type="project" value="UniProtKB-SubCell"/>
</dbReference>
<dbReference type="GO" id="GO:0106357">
    <property type="term" value="F:glycerol-1-phosphate dehydrogenase (NAD+) activity"/>
    <property type="evidence" value="ECO:0007669"/>
    <property type="project" value="RHEA"/>
</dbReference>
<dbReference type="GO" id="GO:0106358">
    <property type="term" value="F:glycerol-1-phosphate dehydrogenase (NADP+) activity"/>
    <property type="evidence" value="ECO:0007669"/>
    <property type="project" value="RHEA"/>
</dbReference>
<dbReference type="GO" id="GO:0046872">
    <property type="term" value="F:metal ion binding"/>
    <property type="evidence" value="ECO:0007669"/>
    <property type="project" value="UniProtKB-KW"/>
</dbReference>
<dbReference type="GO" id="GO:0006650">
    <property type="term" value="P:glycerophospholipid metabolic process"/>
    <property type="evidence" value="ECO:0007669"/>
    <property type="project" value="UniProtKB-UniRule"/>
</dbReference>
<dbReference type="GO" id="GO:0008654">
    <property type="term" value="P:phospholipid biosynthetic process"/>
    <property type="evidence" value="ECO:0007669"/>
    <property type="project" value="UniProtKB-KW"/>
</dbReference>
<dbReference type="CDD" id="cd08173">
    <property type="entry name" value="Gro1PDH"/>
    <property type="match status" value="1"/>
</dbReference>
<dbReference type="Gene3D" id="3.40.50.1970">
    <property type="match status" value="1"/>
</dbReference>
<dbReference type="Gene3D" id="1.20.1090.10">
    <property type="entry name" value="Dehydroquinate synthase-like - alpha domain"/>
    <property type="match status" value="1"/>
</dbReference>
<dbReference type="HAMAP" id="MF_00497_A">
    <property type="entry name" value="G1P_dehydrogenase_A"/>
    <property type="match status" value="1"/>
</dbReference>
<dbReference type="InterPro" id="IPR023002">
    <property type="entry name" value="G1P_dehydrogenase_arc"/>
</dbReference>
<dbReference type="InterPro" id="IPR032837">
    <property type="entry name" value="G1PDH"/>
</dbReference>
<dbReference type="InterPro" id="IPR016205">
    <property type="entry name" value="Glycerol_DH"/>
</dbReference>
<dbReference type="NCBIfam" id="NF002022">
    <property type="entry name" value="PRK00843.1"/>
    <property type="match status" value="1"/>
</dbReference>
<dbReference type="PANTHER" id="PTHR43616">
    <property type="entry name" value="GLYCEROL DEHYDROGENASE"/>
    <property type="match status" value="1"/>
</dbReference>
<dbReference type="PANTHER" id="PTHR43616:SF5">
    <property type="entry name" value="GLYCEROL DEHYDROGENASE 1"/>
    <property type="match status" value="1"/>
</dbReference>
<dbReference type="Pfam" id="PF13685">
    <property type="entry name" value="Fe-ADH_2"/>
    <property type="match status" value="1"/>
</dbReference>
<dbReference type="PIRSF" id="PIRSF000112">
    <property type="entry name" value="Glycerol_dehydrogenase"/>
    <property type="match status" value="1"/>
</dbReference>
<dbReference type="SUPFAM" id="SSF56796">
    <property type="entry name" value="Dehydroquinate synthase-like"/>
    <property type="match status" value="1"/>
</dbReference>
<evidence type="ECO:0000255" key="1">
    <source>
        <dbReference type="HAMAP-Rule" id="MF_00497"/>
    </source>
</evidence>
<feature type="chain" id="PRO_1000135763" description="Glycerol-1-phosphate dehydrogenase [NAD(P)+]">
    <location>
        <begin position="1"/>
        <end position="359"/>
    </location>
</feature>
<feature type="binding site" evidence="1">
    <location>
        <begin position="107"/>
        <end position="111"/>
    </location>
    <ligand>
        <name>NAD(+)</name>
        <dbReference type="ChEBI" id="CHEBI:57540"/>
    </ligand>
</feature>
<feature type="binding site" evidence="1">
    <location>
        <begin position="129"/>
        <end position="132"/>
    </location>
    <ligand>
        <name>NAD(+)</name>
        <dbReference type="ChEBI" id="CHEBI:57540"/>
    </ligand>
</feature>
<feature type="binding site" evidence="1">
    <location>
        <position position="134"/>
    </location>
    <ligand>
        <name>substrate</name>
    </ligand>
</feature>
<feature type="binding site" evidence="1">
    <location>
        <position position="138"/>
    </location>
    <ligand>
        <name>NAD(+)</name>
        <dbReference type="ChEBI" id="CHEBI:57540"/>
    </ligand>
</feature>
<feature type="binding site" evidence="1">
    <location>
        <position position="181"/>
    </location>
    <ligand>
        <name>substrate</name>
    </ligand>
</feature>
<feature type="binding site" evidence="1">
    <location>
        <position position="181"/>
    </location>
    <ligand>
        <name>Zn(2+)</name>
        <dbReference type="ChEBI" id="CHEBI:29105"/>
        <note>catalytic</note>
    </ligand>
</feature>
<feature type="binding site" evidence="1">
    <location>
        <position position="261"/>
    </location>
    <ligand>
        <name>Zn(2+)</name>
        <dbReference type="ChEBI" id="CHEBI:29105"/>
        <note>catalytic</note>
    </ligand>
</feature>
<feature type="binding site" evidence="1">
    <location>
        <position position="265"/>
    </location>
    <ligand>
        <name>substrate</name>
    </ligand>
</feature>
<feature type="binding site" evidence="1">
    <location>
        <position position="277"/>
    </location>
    <ligand>
        <name>Zn(2+)</name>
        <dbReference type="ChEBI" id="CHEBI:29105"/>
        <note>catalytic</note>
    </ligand>
</feature>
<gene>
    <name evidence="1" type="primary">egsA</name>
    <name type="ordered locus">Mpal_0948</name>
</gene>
<protein>
    <recommendedName>
        <fullName evidence="1">Glycerol-1-phosphate dehydrogenase [NAD(P)+]</fullName>
        <shortName evidence="1">G1P dehydrogenase</shortName>
        <shortName evidence="1">G1PDH</shortName>
        <ecNumber evidence="1">1.1.1.261</ecNumber>
    </recommendedName>
    <alternativeName>
        <fullName evidence="1">Enantiomeric glycerophosphate synthase</fullName>
    </alternativeName>
    <alternativeName>
        <fullName evidence="1">sn-glycerol-1-phosphate dehydrogenase</fullName>
    </alternativeName>
</protein>
<keyword id="KW-0963">Cytoplasm</keyword>
<keyword id="KW-0444">Lipid biosynthesis</keyword>
<keyword id="KW-0443">Lipid metabolism</keyword>
<keyword id="KW-0479">Metal-binding</keyword>
<keyword id="KW-0520">NAD</keyword>
<keyword id="KW-0521">NADP</keyword>
<keyword id="KW-0560">Oxidoreductase</keyword>
<keyword id="KW-0594">Phospholipid biosynthesis</keyword>
<keyword id="KW-1208">Phospholipid metabolism</keyword>
<keyword id="KW-1185">Reference proteome</keyword>
<keyword id="KW-0862">Zinc</keyword>
<reference key="1">
    <citation type="journal article" date="2015" name="Genome Announc.">
        <title>Complete Genome Sequence of Methanosphaerula palustris E1-9CT, a Hydrogenotrophic Methanogen Isolated from a Minerotrophic Fen Peatland.</title>
        <authorList>
            <person name="Cadillo-Quiroz H."/>
            <person name="Browne P."/>
            <person name="Kyrpides N."/>
            <person name="Woyke T."/>
            <person name="Goodwin L."/>
            <person name="Detter C."/>
            <person name="Yavitt J.B."/>
            <person name="Zinder S.H."/>
        </authorList>
    </citation>
    <scope>NUCLEOTIDE SEQUENCE [LARGE SCALE GENOMIC DNA]</scope>
    <source>
        <strain>ATCC BAA-1556 / DSM 19958 / E1-9c</strain>
    </source>
</reference>
<organism>
    <name type="scientific">Methanosphaerula palustris (strain ATCC BAA-1556 / DSM 19958 / E1-9c)</name>
    <dbReference type="NCBI Taxonomy" id="521011"/>
    <lineage>
        <taxon>Archaea</taxon>
        <taxon>Methanobacteriati</taxon>
        <taxon>Methanobacteriota</taxon>
        <taxon>Stenosarchaea group</taxon>
        <taxon>Methanomicrobia</taxon>
        <taxon>Methanomicrobiales</taxon>
        <taxon>Methanoregulaceae</taxon>
        <taxon>Methanosphaerula</taxon>
    </lineage>
</organism>
<proteinExistence type="inferred from homology"/>
<accession>B8GGP5</accession>
<sequence>MSADGIKLLRTPGFDKSKWMQLPRDVVIGHNALDQFPAVCQDLKIGRSVMLFAGKSTMQVAGNRIEELLAPSFDISTFLARELTPESMKEGEEAACGVDLIIGVGGGRVIDTAKIVSFNLDLPFISVPTAASHDGIASGRASLQTSEGSASLTAHPPLGVVADTGIIAAAPHRLLAAGCADIISNYTAILDWELSNRLRGEPISEYAITLSRMTAEILMKNAPMIRPHQEESAWMVVKALVSSGVAMAIAGSSRPASGGEHKFSHALERLAPGKALHGEACGIGTIIMMYLHGGDWRGIRTALQQIGAPTTPAELGIPDEVAVAALMMAKTIRPERFSILDSGLTEESATALIRLLYGE</sequence>
<name>G1PDH_METPE</name>
<comment type="function">
    <text evidence="1">Catalyzes the NAD(P)H-dependent reduction of dihydroxyacetonephosphate (DHAP or glycerone phosphate) to glycerol 1-phosphate (G1P). The G1P thus generated is used as the glycerophosphate backbone of phospholipids in the cellular membranes of Archaea.</text>
</comment>
<comment type="catalytic activity">
    <reaction evidence="1">
        <text>sn-glycerol 1-phosphate + NAD(+) = dihydroxyacetone phosphate + NADH + H(+)</text>
        <dbReference type="Rhea" id="RHEA:21412"/>
        <dbReference type="ChEBI" id="CHEBI:15378"/>
        <dbReference type="ChEBI" id="CHEBI:57540"/>
        <dbReference type="ChEBI" id="CHEBI:57642"/>
        <dbReference type="ChEBI" id="CHEBI:57685"/>
        <dbReference type="ChEBI" id="CHEBI:57945"/>
        <dbReference type="EC" id="1.1.1.261"/>
    </reaction>
</comment>
<comment type="catalytic activity">
    <reaction evidence="1">
        <text>sn-glycerol 1-phosphate + NADP(+) = dihydroxyacetone phosphate + NADPH + H(+)</text>
        <dbReference type="Rhea" id="RHEA:21416"/>
        <dbReference type="ChEBI" id="CHEBI:15378"/>
        <dbReference type="ChEBI" id="CHEBI:57642"/>
        <dbReference type="ChEBI" id="CHEBI:57685"/>
        <dbReference type="ChEBI" id="CHEBI:57783"/>
        <dbReference type="ChEBI" id="CHEBI:58349"/>
        <dbReference type="EC" id="1.1.1.261"/>
    </reaction>
</comment>
<comment type="cofactor">
    <cofactor evidence="1">
        <name>Zn(2+)</name>
        <dbReference type="ChEBI" id="CHEBI:29105"/>
    </cofactor>
    <text evidence="1">Binds 1 zinc ion per subunit.</text>
</comment>
<comment type="pathway">
    <text evidence="1">Membrane lipid metabolism; glycerophospholipid metabolism.</text>
</comment>
<comment type="subcellular location">
    <subcellularLocation>
        <location evidence="1">Cytoplasm</location>
    </subcellularLocation>
</comment>
<comment type="similarity">
    <text evidence="1">Belongs to the glycerol-1-phosphate dehydrogenase family.</text>
</comment>